<evidence type="ECO:0000255" key="1">
    <source>
        <dbReference type="HAMAP-Rule" id="MF_00121"/>
    </source>
</evidence>
<comment type="function">
    <text evidence="1">Allows the formation of correctly charged Asn-tRNA(Asn) or Gln-tRNA(Gln) through the transamidation of misacylated Asp-tRNA(Asn) or Glu-tRNA(Gln) in organisms which lack either or both of asparaginyl-tRNA or glutaminyl-tRNA synthetases. The reaction takes place in the presence of glutamine and ATP through an activated phospho-Asp-tRNA(Asn) or phospho-Glu-tRNA(Gln).</text>
</comment>
<comment type="catalytic activity">
    <reaction evidence="1">
        <text>L-glutamyl-tRNA(Gln) + L-glutamine + ATP + H2O = L-glutaminyl-tRNA(Gln) + L-glutamate + ADP + phosphate + H(+)</text>
        <dbReference type="Rhea" id="RHEA:17521"/>
        <dbReference type="Rhea" id="RHEA-COMP:9681"/>
        <dbReference type="Rhea" id="RHEA-COMP:9684"/>
        <dbReference type="ChEBI" id="CHEBI:15377"/>
        <dbReference type="ChEBI" id="CHEBI:15378"/>
        <dbReference type="ChEBI" id="CHEBI:29985"/>
        <dbReference type="ChEBI" id="CHEBI:30616"/>
        <dbReference type="ChEBI" id="CHEBI:43474"/>
        <dbReference type="ChEBI" id="CHEBI:58359"/>
        <dbReference type="ChEBI" id="CHEBI:78520"/>
        <dbReference type="ChEBI" id="CHEBI:78521"/>
        <dbReference type="ChEBI" id="CHEBI:456216"/>
    </reaction>
</comment>
<comment type="catalytic activity">
    <reaction evidence="1">
        <text>L-aspartyl-tRNA(Asn) + L-glutamine + ATP + H2O = L-asparaginyl-tRNA(Asn) + L-glutamate + ADP + phosphate + 2 H(+)</text>
        <dbReference type="Rhea" id="RHEA:14513"/>
        <dbReference type="Rhea" id="RHEA-COMP:9674"/>
        <dbReference type="Rhea" id="RHEA-COMP:9677"/>
        <dbReference type="ChEBI" id="CHEBI:15377"/>
        <dbReference type="ChEBI" id="CHEBI:15378"/>
        <dbReference type="ChEBI" id="CHEBI:29985"/>
        <dbReference type="ChEBI" id="CHEBI:30616"/>
        <dbReference type="ChEBI" id="CHEBI:43474"/>
        <dbReference type="ChEBI" id="CHEBI:58359"/>
        <dbReference type="ChEBI" id="CHEBI:78515"/>
        <dbReference type="ChEBI" id="CHEBI:78516"/>
        <dbReference type="ChEBI" id="CHEBI:456216"/>
    </reaction>
</comment>
<comment type="subunit">
    <text evidence="1">Heterotrimer of A, B and C subunits.</text>
</comment>
<comment type="similarity">
    <text evidence="1">Belongs to the GatB/GatE family. GatB subfamily.</text>
</comment>
<accession>A4XHY9</accession>
<feature type="chain" id="PRO_1000015950" description="Aspartyl/glutamyl-tRNA(Asn/Gln) amidotransferase subunit B">
    <location>
        <begin position="1"/>
        <end position="480"/>
    </location>
</feature>
<reference key="1">
    <citation type="submission" date="2007-04" db="EMBL/GenBank/DDBJ databases">
        <title>Genome sequence of the thermophilic hydrogen-producing bacterium Caldicellulosiruptor saccharolyticus DSM 8903.</title>
        <authorList>
            <person name="Copeland A."/>
            <person name="Lucas S."/>
            <person name="Lapidus A."/>
            <person name="Barry K."/>
            <person name="Detter J.C."/>
            <person name="Glavina del Rio T."/>
            <person name="Hammon N."/>
            <person name="Israni S."/>
            <person name="Dalin E."/>
            <person name="Tice H."/>
            <person name="Pitluck S."/>
            <person name="Kiss H."/>
            <person name="Brettin T."/>
            <person name="Bruce D."/>
            <person name="Han C."/>
            <person name="Schmutz J."/>
            <person name="Larimer F."/>
            <person name="Land M."/>
            <person name="Hauser L."/>
            <person name="Kyrpides N."/>
            <person name="Lykidis A."/>
            <person name="van de Werken H.J.G."/>
            <person name="Verhaart M.R.A."/>
            <person name="VanFossen A.L."/>
            <person name="Lewis D.L."/>
            <person name="Nichols J.D."/>
            <person name="Goorissen H.P."/>
            <person name="van Niel E.W.J."/>
            <person name="Stams F.J.M."/>
            <person name="Willquist K.U."/>
            <person name="Ward D.E."/>
            <person name="van der Oost J."/>
            <person name="Kelly R.M."/>
            <person name="Kengen S.M.W."/>
            <person name="Richardson P."/>
        </authorList>
    </citation>
    <scope>NUCLEOTIDE SEQUENCE [LARGE SCALE GENOMIC DNA]</scope>
    <source>
        <strain>ATCC 43494 / DSM 8903 / Tp8T 6331</strain>
    </source>
</reference>
<protein>
    <recommendedName>
        <fullName evidence="1">Aspartyl/glutamyl-tRNA(Asn/Gln) amidotransferase subunit B</fullName>
        <shortName evidence="1">Asp/Glu-ADT subunit B</shortName>
        <ecNumber evidence="1">6.3.5.-</ecNumber>
    </recommendedName>
</protein>
<proteinExistence type="inferred from homology"/>
<gene>
    <name evidence="1" type="primary">gatB</name>
    <name type="ordered locus">Csac_0910</name>
</gene>
<organism>
    <name type="scientific">Caldicellulosiruptor saccharolyticus (strain ATCC 43494 / DSM 8903 / Tp8T 6331)</name>
    <dbReference type="NCBI Taxonomy" id="351627"/>
    <lineage>
        <taxon>Bacteria</taxon>
        <taxon>Bacillati</taxon>
        <taxon>Bacillota</taxon>
        <taxon>Bacillota incertae sedis</taxon>
        <taxon>Caldicellulosiruptorales</taxon>
        <taxon>Caldicellulosiruptoraceae</taxon>
        <taxon>Caldicellulosiruptor</taxon>
    </lineage>
</organism>
<sequence length="480" mass="54746">MEYEVVIGLEVHAELATKSKIFCSCTTEFGGEPNTHCCPICTGMPGVLPVLNKKAVEYAIMAGLATNCQIARYSKQDRKNYFYPDLPKAYQISQYDLPLCYNGYIDIEVNGQKKRIGIKRIHIEEDAGKLLHDQWEEGSLVDFNRCGVPLIEIVTEPDLRSSEETRIFLEKLKAILQYTGVSDCKMQEGSLRVDVNLSVRPKGSKEFGTRTEMKNLNSFRSVVRAIEYEAKRQIEVLESGGVVVQETRRWDEAKGITLSMRTKEEAHDYRYFPEPDLPPIIVDDNWIEEIRKRIPELPDQKKERYIKEYGLPEYDAGVLTSSNAIANYFEECIKYTQNIKAASNWMMGEIMRILNDRGLEPEEIVNIKIRPNQLASLINLVDNKTISNTIAKQVFEEMFETGKDPEVIVKEKGLVQITDRNVILEAVKQAIANNPKSVEDYKNGKDKAFGFLVGQVMKITKGKANPQLVNEILREELEKI</sequence>
<name>GATB_CALS8</name>
<dbReference type="EC" id="6.3.5.-" evidence="1"/>
<dbReference type="EMBL" id="CP000679">
    <property type="protein sequence ID" value="ABP66524.1"/>
    <property type="molecule type" value="Genomic_DNA"/>
</dbReference>
<dbReference type="RefSeq" id="WP_011916470.1">
    <property type="nucleotide sequence ID" value="NC_009437.1"/>
</dbReference>
<dbReference type="SMR" id="A4XHY9"/>
<dbReference type="STRING" id="351627.Csac_0910"/>
<dbReference type="KEGG" id="csc:Csac_0910"/>
<dbReference type="eggNOG" id="COG0064">
    <property type="taxonomic scope" value="Bacteria"/>
</dbReference>
<dbReference type="HOGENOM" id="CLU_019240_0_0_9"/>
<dbReference type="OrthoDB" id="9804078at2"/>
<dbReference type="Proteomes" id="UP000000256">
    <property type="component" value="Chromosome"/>
</dbReference>
<dbReference type="GO" id="GO:0050566">
    <property type="term" value="F:asparaginyl-tRNA synthase (glutamine-hydrolyzing) activity"/>
    <property type="evidence" value="ECO:0007669"/>
    <property type="project" value="RHEA"/>
</dbReference>
<dbReference type="GO" id="GO:0005524">
    <property type="term" value="F:ATP binding"/>
    <property type="evidence" value="ECO:0007669"/>
    <property type="project" value="UniProtKB-KW"/>
</dbReference>
<dbReference type="GO" id="GO:0050567">
    <property type="term" value="F:glutaminyl-tRNA synthase (glutamine-hydrolyzing) activity"/>
    <property type="evidence" value="ECO:0007669"/>
    <property type="project" value="UniProtKB-UniRule"/>
</dbReference>
<dbReference type="GO" id="GO:0070681">
    <property type="term" value="P:glutaminyl-tRNAGln biosynthesis via transamidation"/>
    <property type="evidence" value="ECO:0007669"/>
    <property type="project" value="TreeGrafter"/>
</dbReference>
<dbReference type="GO" id="GO:0006412">
    <property type="term" value="P:translation"/>
    <property type="evidence" value="ECO:0007669"/>
    <property type="project" value="UniProtKB-UniRule"/>
</dbReference>
<dbReference type="FunFam" id="1.10.10.410:FF:000001">
    <property type="entry name" value="Aspartyl/glutamyl-tRNA(Asn/Gln) amidotransferase subunit B"/>
    <property type="match status" value="1"/>
</dbReference>
<dbReference type="FunFam" id="1.10.150.380:FF:000001">
    <property type="entry name" value="Aspartyl/glutamyl-tRNA(Asn/Gln) amidotransferase subunit B"/>
    <property type="match status" value="1"/>
</dbReference>
<dbReference type="Gene3D" id="1.10.10.410">
    <property type="match status" value="1"/>
</dbReference>
<dbReference type="Gene3D" id="1.10.150.380">
    <property type="entry name" value="GatB domain, N-terminal subdomain"/>
    <property type="match status" value="1"/>
</dbReference>
<dbReference type="HAMAP" id="MF_00121">
    <property type="entry name" value="GatB"/>
    <property type="match status" value="1"/>
</dbReference>
<dbReference type="InterPro" id="IPR017959">
    <property type="entry name" value="Asn/Gln-tRNA_amidoTrfase_suB/E"/>
</dbReference>
<dbReference type="InterPro" id="IPR006075">
    <property type="entry name" value="Asn/Gln-tRNA_Trfase_suB/E_cat"/>
</dbReference>
<dbReference type="InterPro" id="IPR018027">
    <property type="entry name" value="Asn/Gln_amidotransferase"/>
</dbReference>
<dbReference type="InterPro" id="IPR003789">
    <property type="entry name" value="Asn/Gln_tRNA_amidoTrase-B-like"/>
</dbReference>
<dbReference type="InterPro" id="IPR004413">
    <property type="entry name" value="GatB"/>
</dbReference>
<dbReference type="InterPro" id="IPR042114">
    <property type="entry name" value="GatB_C_1"/>
</dbReference>
<dbReference type="InterPro" id="IPR023168">
    <property type="entry name" value="GatB_Yqey_C_2"/>
</dbReference>
<dbReference type="InterPro" id="IPR017958">
    <property type="entry name" value="Gln-tRNA_amidoTrfase_suB_CS"/>
</dbReference>
<dbReference type="InterPro" id="IPR014746">
    <property type="entry name" value="Gln_synth/guanido_kin_cat_dom"/>
</dbReference>
<dbReference type="NCBIfam" id="TIGR00133">
    <property type="entry name" value="gatB"/>
    <property type="match status" value="1"/>
</dbReference>
<dbReference type="NCBIfam" id="NF004012">
    <property type="entry name" value="PRK05477.1-2"/>
    <property type="match status" value="1"/>
</dbReference>
<dbReference type="NCBIfam" id="NF004014">
    <property type="entry name" value="PRK05477.1-4"/>
    <property type="match status" value="1"/>
</dbReference>
<dbReference type="NCBIfam" id="NF004015">
    <property type="entry name" value="PRK05477.1-5"/>
    <property type="match status" value="1"/>
</dbReference>
<dbReference type="PANTHER" id="PTHR11659">
    <property type="entry name" value="GLUTAMYL-TRNA GLN AMIDOTRANSFERASE SUBUNIT B MITOCHONDRIAL AND PROKARYOTIC PET112-RELATED"/>
    <property type="match status" value="1"/>
</dbReference>
<dbReference type="PANTHER" id="PTHR11659:SF0">
    <property type="entry name" value="GLUTAMYL-TRNA(GLN) AMIDOTRANSFERASE SUBUNIT B, MITOCHONDRIAL"/>
    <property type="match status" value="1"/>
</dbReference>
<dbReference type="Pfam" id="PF02934">
    <property type="entry name" value="GatB_N"/>
    <property type="match status" value="1"/>
</dbReference>
<dbReference type="Pfam" id="PF02637">
    <property type="entry name" value="GatB_Yqey"/>
    <property type="match status" value="1"/>
</dbReference>
<dbReference type="SMART" id="SM00845">
    <property type="entry name" value="GatB_Yqey"/>
    <property type="match status" value="1"/>
</dbReference>
<dbReference type="SUPFAM" id="SSF89095">
    <property type="entry name" value="GatB/YqeY motif"/>
    <property type="match status" value="1"/>
</dbReference>
<dbReference type="SUPFAM" id="SSF55931">
    <property type="entry name" value="Glutamine synthetase/guanido kinase"/>
    <property type="match status" value="1"/>
</dbReference>
<dbReference type="PROSITE" id="PS01234">
    <property type="entry name" value="GATB"/>
    <property type="match status" value="1"/>
</dbReference>
<keyword id="KW-0067">ATP-binding</keyword>
<keyword id="KW-0436">Ligase</keyword>
<keyword id="KW-0547">Nucleotide-binding</keyword>
<keyword id="KW-0648">Protein biosynthesis</keyword>